<organism>
    <name type="scientific">Arabidopsis thaliana</name>
    <name type="common">Mouse-ear cress</name>
    <dbReference type="NCBI Taxonomy" id="3702"/>
    <lineage>
        <taxon>Eukaryota</taxon>
        <taxon>Viridiplantae</taxon>
        <taxon>Streptophyta</taxon>
        <taxon>Embryophyta</taxon>
        <taxon>Tracheophyta</taxon>
        <taxon>Spermatophyta</taxon>
        <taxon>Magnoliopsida</taxon>
        <taxon>eudicotyledons</taxon>
        <taxon>Gunneridae</taxon>
        <taxon>Pentapetalae</taxon>
        <taxon>rosids</taxon>
        <taxon>malvids</taxon>
        <taxon>Brassicales</taxon>
        <taxon>Brassicaceae</taxon>
        <taxon>Camelineae</taxon>
        <taxon>Arabidopsis</taxon>
    </lineage>
</organism>
<evidence type="ECO:0000255" key="1"/>
<evidence type="ECO:0000305" key="2"/>
<dbReference type="EMBL" id="AC004077">
    <property type="status" value="NOT_ANNOTATED_CDS"/>
    <property type="molecule type" value="Genomic_DNA"/>
</dbReference>
<dbReference type="EMBL" id="AC004481">
    <property type="protein sequence ID" value="AAM14949.1"/>
    <property type="molecule type" value="Genomic_DNA"/>
</dbReference>
<dbReference type="EMBL" id="CP002685">
    <property type="protein sequence ID" value="AEC08965.1"/>
    <property type="molecule type" value="Genomic_DNA"/>
</dbReference>
<dbReference type="EMBL" id="DQ056566">
    <property type="protein sequence ID" value="AAY78716.1"/>
    <property type="molecule type" value="mRNA"/>
</dbReference>
<dbReference type="PIR" id="T02325">
    <property type="entry name" value="T02325"/>
</dbReference>
<dbReference type="RefSeq" id="NP_180984.1">
    <property type="nucleotide sequence ID" value="NM_128989.2"/>
</dbReference>
<dbReference type="SMR" id="Q8S8Q7"/>
<dbReference type="STRING" id="3702.Q8S8Q7"/>
<dbReference type="PaxDb" id="3702-AT2G34370.1"/>
<dbReference type="EnsemblPlants" id="AT2G34370.1">
    <property type="protein sequence ID" value="AT2G34370.1"/>
    <property type="gene ID" value="AT2G34370"/>
</dbReference>
<dbReference type="GeneID" id="818000"/>
<dbReference type="Gramene" id="AT2G34370.1">
    <property type="protein sequence ID" value="AT2G34370.1"/>
    <property type="gene ID" value="AT2G34370"/>
</dbReference>
<dbReference type="KEGG" id="ath:AT2G34370"/>
<dbReference type="Araport" id="AT2G34370"/>
<dbReference type="TAIR" id="AT2G34370">
    <property type="gene designation" value="DYW3"/>
</dbReference>
<dbReference type="eggNOG" id="KOG4197">
    <property type="taxonomic scope" value="Eukaryota"/>
</dbReference>
<dbReference type="HOGENOM" id="CLU_002706_37_1_1"/>
<dbReference type="InParanoid" id="Q8S8Q7"/>
<dbReference type="OMA" id="CIDGHNT"/>
<dbReference type="PhylomeDB" id="Q8S8Q7"/>
<dbReference type="PRO" id="PR:Q8S8Q7"/>
<dbReference type="Proteomes" id="UP000006548">
    <property type="component" value="Chromosome 2"/>
</dbReference>
<dbReference type="ExpressionAtlas" id="Q8S8Q7">
    <property type="expression patterns" value="baseline and differential"/>
</dbReference>
<dbReference type="GO" id="GO:0005739">
    <property type="term" value="C:mitochondrion"/>
    <property type="evidence" value="ECO:0007669"/>
    <property type="project" value="UniProtKB-SubCell"/>
</dbReference>
<dbReference type="GO" id="GO:0003723">
    <property type="term" value="F:RNA binding"/>
    <property type="evidence" value="ECO:0007669"/>
    <property type="project" value="InterPro"/>
</dbReference>
<dbReference type="GO" id="GO:0008270">
    <property type="term" value="F:zinc ion binding"/>
    <property type="evidence" value="ECO:0007669"/>
    <property type="project" value="InterPro"/>
</dbReference>
<dbReference type="GO" id="GO:0009451">
    <property type="term" value="P:RNA modification"/>
    <property type="evidence" value="ECO:0007669"/>
    <property type="project" value="InterPro"/>
</dbReference>
<dbReference type="FunFam" id="1.25.40.10:FF:000503">
    <property type="entry name" value="Pentatricopeptide repeat-containing protein, mitochondrial"/>
    <property type="match status" value="1"/>
</dbReference>
<dbReference type="Gene3D" id="1.25.40.10">
    <property type="entry name" value="Tetratricopeptide repeat domain"/>
    <property type="match status" value="1"/>
</dbReference>
<dbReference type="InterPro" id="IPR032867">
    <property type="entry name" value="DYW_dom"/>
</dbReference>
<dbReference type="InterPro" id="IPR002885">
    <property type="entry name" value="Pentatricopeptide_rpt"/>
</dbReference>
<dbReference type="InterPro" id="IPR046960">
    <property type="entry name" value="PPR_At4g14850-like_plant"/>
</dbReference>
<dbReference type="InterPro" id="IPR011990">
    <property type="entry name" value="TPR-like_helical_dom_sf"/>
</dbReference>
<dbReference type="NCBIfam" id="TIGR00756">
    <property type="entry name" value="PPR"/>
    <property type="match status" value="2"/>
</dbReference>
<dbReference type="PANTHER" id="PTHR47926:SF388">
    <property type="entry name" value="DYW DOMAIN-CONTAINING PROTEIN"/>
    <property type="match status" value="1"/>
</dbReference>
<dbReference type="PANTHER" id="PTHR47926">
    <property type="entry name" value="PENTATRICOPEPTIDE REPEAT-CONTAINING PROTEIN"/>
    <property type="match status" value="1"/>
</dbReference>
<dbReference type="Pfam" id="PF14432">
    <property type="entry name" value="DYW_deaminase"/>
    <property type="match status" value="1"/>
</dbReference>
<dbReference type="Pfam" id="PF01535">
    <property type="entry name" value="PPR"/>
    <property type="match status" value="3"/>
</dbReference>
<dbReference type="PROSITE" id="PS51375">
    <property type="entry name" value="PPR"/>
    <property type="match status" value="5"/>
</dbReference>
<protein>
    <recommendedName>
        <fullName>Pentatricopeptide repeat-containing protein At2g34370, mitochondrial</fullName>
    </recommendedName>
</protein>
<name>PP183_ARATH</name>
<gene>
    <name type="primary">PCMP-H25</name>
    <name type="synonym">PCMP-H62</name>
    <name type="ordered locus">At2g34370</name>
    <name type="ORF">F13P17.21</name>
    <name type="ORF">T31E10</name>
</gene>
<sequence length="469" mass="53856">MVRLVCSRILKFPKPYLWSATQTTSRCFNSRAQSHNLITKTITSSLQDVLTRPIWQNRSFVQCRRVSSYAQMVNNHQSVTIETFDALCKQVKIREALEVIDILEDKGYIVDFPRLLGLAKLCGEVEALEEARVVHDCITPLDARSYHTVIEMYSGCRSTDDALNVFNEMPKRNSETWGTMIRCLAKNGEGERAIDMFTRFIEEGNKPDKEIFKAVFFACVSIGDINEGLLHFESMYRDYGMVLSMEDYVNVIEMLAACGHLDEALDFVERMTVEPSVEMWETLMNLCWVQGYLELGDRFAELIKKLDASRMSKESNAGLVAAKASDSAMEKLKELRYCQMIRDDPKKRMHEFRAGDTSHLGTVSAFRSLKVQMLDIGFVPATRVCFVTVEEEEKEEQLLFRSNKLAFAHAIINSEARRPLTVLQNMRTCIDGHNTFKMISLITGRALIQRDKKKYHFYKNGVCSCKDYW</sequence>
<keyword id="KW-0496">Mitochondrion</keyword>
<keyword id="KW-1185">Reference proteome</keyword>
<keyword id="KW-0677">Repeat</keyword>
<keyword id="KW-0809">Transit peptide</keyword>
<comment type="subcellular location">
    <subcellularLocation>
        <location evidence="2">Mitochondrion</location>
    </subcellularLocation>
</comment>
<comment type="similarity">
    <text evidence="2">Belongs to the PPR family. PCMP-H subfamily.</text>
</comment>
<comment type="online information" name="Pentatricopeptide repeat proteins">
    <link uri="https://ppr.plantenergy.uwa.edu.au"/>
</comment>
<feature type="transit peptide" description="Mitochondrion" evidence="1">
    <location>
        <begin position="1"/>
        <end position="65"/>
    </location>
</feature>
<feature type="chain" id="PRO_0000356042" description="Pentatricopeptide repeat-containing protein At2g34370, mitochondrial">
    <location>
        <begin position="66"/>
        <end position="469"/>
    </location>
</feature>
<feature type="repeat" description="PPR 1">
    <location>
        <begin position="142"/>
        <end position="172"/>
    </location>
</feature>
<feature type="repeat" description="PPR 2">
    <location>
        <begin position="173"/>
        <end position="207"/>
    </location>
</feature>
<feature type="repeat" description="PPR 3">
    <location>
        <begin position="208"/>
        <end position="238"/>
    </location>
</feature>
<feature type="repeat" description="PPR 4">
    <location>
        <begin position="244"/>
        <end position="274"/>
    </location>
</feature>
<feature type="region of interest" description="Type DYW motif">
    <location>
        <begin position="375"/>
        <end position="469"/>
    </location>
</feature>
<reference key="1">
    <citation type="journal article" date="1999" name="Nature">
        <title>Sequence and analysis of chromosome 2 of the plant Arabidopsis thaliana.</title>
        <authorList>
            <person name="Lin X."/>
            <person name="Kaul S."/>
            <person name="Rounsley S.D."/>
            <person name="Shea T.P."/>
            <person name="Benito M.-I."/>
            <person name="Town C.D."/>
            <person name="Fujii C.Y."/>
            <person name="Mason T.M."/>
            <person name="Bowman C.L."/>
            <person name="Barnstead M.E."/>
            <person name="Feldblyum T.V."/>
            <person name="Buell C.R."/>
            <person name="Ketchum K.A."/>
            <person name="Lee J.J."/>
            <person name="Ronning C.M."/>
            <person name="Koo H.L."/>
            <person name="Moffat K.S."/>
            <person name="Cronin L.A."/>
            <person name="Shen M."/>
            <person name="Pai G."/>
            <person name="Van Aken S."/>
            <person name="Umayam L."/>
            <person name="Tallon L.J."/>
            <person name="Gill J.E."/>
            <person name="Adams M.D."/>
            <person name="Carrera A.J."/>
            <person name="Creasy T.H."/>
            <person name="Goodman H.M."/>
            <person name="Somerville C.R."/>
            <person name="Copenhaver G.P."/>
            <person name="Preuss D."/>
            <person name="Nierman W.C."/>
            <person name="White O."/>
            <person name="Eisen J.A."/>
            <person name="Salzberg S.L."/>
            <person name="Fraser C.M."/>
            <person name="Venter J.C."/>
        </authorList>
    </citation>
    <scope>NUCLEOTIDE SEQUENCE [LARGE SCALE GENOMIC DNA]</scope>
    <source>
        <strain>cv. Columbia</strain>
    </source>
</reference>
<reference key="2">
    <citation type="journal article" date="2017" name="Plant J.">
        <title>Araport11: a complete reannotation of the Arabidopsis thaliana reference genome.</title>
        <authorList>
            <person name="Cheng C.Y."/>
            <person name="Krishnakumar V."/>
            <person name="Chan A.P."/>
            <person name="Thibaud-Nissen F."/>
            <person name="Schobel S."/>
            <person name="Town C.D."/>
        </authorList>
    </citation>
    <scope>GENOME REANNOTATION</scope>
    <source>
        <strain>cv. Columbia</strain>
    </source>
</reference>
<reference key="3">
    <citation type="journal article" date="2006" name="Plant Biotechnol. J.">
        <title>Simultaneous high-throughput recombinational cloning of open reading frames in closed and open configurations.</title>
        <authorList>
            <person name="Underwood B.A."/>
            <person name="Vanderhaeghen R."/>
            <person name="Whitford R."/>
            <person name="Town C.D."/>
            <person name="Hilson P."/>
        </authorList>
    </citation>
    <scope>NUCLEOTIDE SEQUENCE [LARGE SCALE MRNA]</scope>
    <source>
        <strain>cv. Columbia</strain>
    </source>
</reference>
<reference key="4">
    <citation type="journal article" date="2000" name="Plant Mol. Biol.">
        <title>In Arabidopsis thaliana, 1% of the genome codes for a novel protein family unique to plants.</title>
        <authorList>
            <person name="Aubourg S."/>
            <person name="Boudet N."/>
            <person name="Kreis M."/>
            <person name="Lecharny A."/>
        </authorList>
    </citation>
    <scope>GENE FAMILY</scope>
</reference>
<reference key="5">
    <citation type="journal article" date="2004" name="Plant Cell">
        <title>Genome-wide analysis of Arabidopsis pentatricopeptide repeat proteins reveals their essential role in organelle biogenesis.</title>
        <authorList>
            <person name="Lurin C."/>
            <person name="Andres C."/>
            <person name="Aubourg S."/>
            <person name="Bellaoui M."/>
            <person name="Bitton F."/>
            <person name="Bruyere C."/>
            <person name="Caboche M."/>
            <person name="Debast C."/>
            <person name="Gualberto J."/>
            <person name="Hoffmann B."/>
            <person name="Lecharny A."/>
            <person name="Le Ret M."/>
            <person name="Martin-Magniette M.-L."/>
            <person name="Mireau H."/>
            <person name="Peeters N."/>
            <person name="Renou J.-P."/>
            <person name="Szurek B."/>
            <person name="Taconnat L."/>
            <person name="Small I."/>
        </authorList>
    </citation>
    <scope>GENE FAMILY</scope>
</reference>
<accession>Q8S8Q7</accession>
<proteinExistence type="evidence at transcript level"/>